<keyword id="KW-0238">DNA-binding</keyword>
<keyword id="KW-0371">Homeobox</keyword>
<keyword id="KW-1017">Isopeptide bond</keyword>
<keyword id="KW-0479">Metal-binding</keyword>
<keyword id="KW-0539">Nucleus</keyword>
<keyword id="KW-0597">Phosphoprotein</keyword>
<keyword id="KW-0677">Repeat</keyword>
<keyword id="KW-0678">Repressor</keyword>
<keyword id="KW-0804">Transcription</keyword>
<keyword id="KW-0805">Transcription regulation</keyword>
<keyword id="KW-0832">Ubl conjugation</keyword>
<keyword id="KW-0862">Zinc</keyword>
<keyword id="KW-0863">Zinc-finger</keyword>
<proteinExistence type="inferred from homology"/>
<protein>
    <recommendedName>
        <fullName>Zinc fingers and homeoboxes protein 1</fullName>
    </recommendedName>
</protein>
<sequence length="873" mass="98113">MASRRKSTTPCMVLASEQDPDLELISDLDEGPPVLTPVENTRAESISSDEEVHESVDSDNQQNKKVEGGYECKYCTFQTPDLNMFTFHVDSEHPNVVLNSSYVCVECNFLTKRYDALSEHNLKYHPGEENFKLTMVKRNNQTIFEQTINDLTFDGSFVKEENAEQAESTEVSSSGISISKTPIMKMMKNKVENKRIAVHHNSVEDVPEEKENEIKPDREETVENPSSSASESNTSTSIVNRIHPSTASTVVTPAAVLPGLAQVITAVSAQQNSNLIPKVLIPVNSIPTYNAALDNNPLLLNTYNKFPYPTMSEITVLSAQAKYTEEQIKIWFSAQRLKHGVSWTPEEVEEARRKQFNGTVHTVPQTITVIPTHISTGSNGLPSILQTCQIVGQPGLVLTQVAGTNTLPVTAPIALTVAGVPSQNNVQKSQVPAAQPTAETKPATAAVPTSQSVKHETALVNPDSFGIRAKKTKEQLAELKVSYLKNQFPHDSEIIRLMKITGLTKGEIKKWFSDTRYNQRNSKSNQCLHLNNDSSTTIIIDSSDETTESPTVGTVQPKQSWNPFPDFTPQKFKEKTAEQLRVLQASFLNNSVLTDEELNRLRAQTKLTRREIDAWFTEKKKSKALKEEKMEIDESNAGSSKEEAGETSPGDESGAPKSGSTGKICKKTPEQLHMLKSAFVRTQWPSPEEYDKLAKESGLARTDIVSWFGDTRYAWKNGNLKWYYYYQSANSSSMNGLSSLRKRGRGRPKGRGRGRPRGRPRGSKRINNWDRGPSLIKFKTGTAILKDYYLKHKFLNEQDLDELVNKSHMGYEQVREWFAERQRRSELGIELFEENEEEDEVIDDQEEDEEETDDSDTWEPPRHVKRKLSKSDD</sequence>
<accession>A2T7S4</accession>
<gene>
    <name type="primary">ZHX1</name>
</gene>
<feature type="chain" id="PRO_0000285463" description="Zinc fingers and homeoboxes protein 1">
    <location>
        <begin position="1"/>
        <end position="873"/>
    </location>
</feature>
<feature type="zinc finger region" description="C2H2-type 1" evidence="3">
    <location>
        <begin position="70"/>
        <end position="93"/>
    </location>
</feature>
<feature type="zinc finger region" description="C2H2-type 2" evidence="3">
    <location>
        <begin position="102"/>
        <end position="125"/>
    </location>
</feature>
<feature type="DNA-binding region" description="Homeobox 1" evidence="4">
    <location>
        <begin position="284"/>
        <end position="346"/>
    </location>
</feature>
<feature type="DNA-binding region" description="Homeobox 2" evidence="4">
    <location>
        <begin position="464"/>
        <end position="526"/>
    </location>
</feature>
<feature type="DNA-binding region" description="Homeobox 3" evidence="4">
    <location>
        <begin position="569"/>
        <end position="630"/>
    </location>
</feature>
<feature type="DNA-binding region" description="Homeobox 4" evidence="4">
    <location>
        <begin position="660"/>
        <end position="722"/>
    </location>
</feature>
<feature type="DNA-binding region" description="Homeobox 5" evidence="4">
    <location>
        <begin position="777"/>
        <end position="832"/>
    </location>
</feature>
<feature type="region of interest" description="Disordered" evidence="5">
    <location>
        <begin position="24"/>
        <end position="63"/>
    </location>
</feature>
<feature type="region of interest" description="Disordered" evidence="5">
    <location>
        <begin position="198"/>
        <end position="236"/>
    </location>
</feature>
<feature type="region of interest" description="Required for interaction with NFYA" evidence="1">
    <location>
        <begin position="272"/>
        <end position="564"/>
    </location>
</feature>
<feature type="region of interest" description="Required for dimerization" evidence="1">
    <location>
        <begin position="272"/>
        <end position="432"/>
    </location>
</feature>
<feature type="region of interest" description="Disordered" evidence="5">
    <location>
        <begin position="431"/>
        <end position="454"/>
    </location>
</feature>
<feature type="region of interest" description="Disordered" evidence="5">
    <location>
        <begin position="544"/>
        <end position="563"/>
    </location>
</feature>
<feature type="region of interest" description="Disordered" evidence="5">
    <location>
        <begin position="626"/>
        <end position="668"/>
    </location>
</feature>
<feature type="region of interest" description="Disordered" evidence="5">
    <location>
        <begin position="732"/>
        <end position="769"/>
    </location>
</feature>
<feature type="region of interest" description="Required for nuclear localization" evidence="1">
    <location>
        <begin position="734"/>
        <end position="768"/>
    </location>
</feature>
<feature type="region of interest" description="Disordered" evidence="5">
    <location>
        <begin position="829"/>
        <end position="873"/>
    </location>
</feature>
<feature type="region of interest" description="Required for repressor activity" evidence="1">
    <location>
        <begin position="831"/>
        <end position="873"/>
    </location>
</feature>
<feature type="compositionally biased region" description="Basic and acidic residues" evidence="5">
    <location>
        <begin position="212"/>
        <end position="221"/>
    </location>
</feature>
<feature type="compositionally biased region" description="Low complexity" evidence="5">
    <location>
        <begin position="223"/>
        <end position="236"/>
    </location>
</feature>
<feature type="compositionally biased region" description="Polar residues" evidence="5">
    <location>
        <begin position="550"/>
        <end position="562"/>
    </location>
</feature>
<feature type="compositionally biased region" description="Basic residues" evidence="5">
    <location>
        <begin position="740"/>
        <end position="764"/>
    </location>
</feature>
<feature type="compositionally biased region" description="Acidic residues" evidence="5">
    <location>
        <begin position="831"/>
        <end position="857"/>
    </location>
</feature>
<feature type="compositionally biased region" description="Basic residues" evidence="5">
    <location>
        <begin position="863"/>
        <end position="873"/>
    </location>
</feature>
<feature type="modified residue" description="Phosphothreonine" evidence="2">
    <location>
        <position position="36"/>
    </location>
</feature>
<feature type="modified residue" description="Phosphoserine" evidence="2">
    <location>
        <position position="45"/>
    </location>
</feature>
<feature type="modified residue" description="Phosphoserine" evidence="2">
    <location>
        <position position="47"/>
    </location>
</feature>
<feature type="modified residue" description="Phosphoserine" evidence="2">
    <location>
        <position position="48"/>
    </location>
</feature>
<feature type="modified residue" description="Phosphoserine" evidence="2">
    <location>
        <position position="202"/>
    </location>
</feature>
<feature type="modified residue" description="Phosphoserine" evidence="2">
    <location>
        <position position="648"/>
    </location>
</feature>
<feature type="modified residue" description="Phosphoserine" evidence="2">
    <location>
        <position position="774"/>
    </location>
</feature>
<feature type="cross-link" description="Glycyl lysine isopeptide (Lys-Gly) (interchain with G-Cter in SUMO2)" evidence="2">
    <location>
        <position position="159"/>
    </location>
</feature>
<feature type="cross-link" description="Glycyl lysine isopeptide (Lys-Gly) (interchain with G-Cter in SUMO2)" evidence="2">
    <location>
        <position position="441"/>
    </location>
</feature>
<feature type="cross-link" description="Glycyl lysine isopeptide (Lys-Gly) (interchain with G-Cter in SUMO2)" evidence="2">
    <location>
        <position position="454"/>
    </location>
</feature>
<feature type="cross-link" description="Glycyl lysine isopeptide (Lys-Gly) (interchain with G-Cter in SUMO2)" evidence="2">
    <location>
        <position position="485"/>
    </location>
</feature>
<feature type="cross-link" description="Glycyl lysine isopeptide (Lys-Gly) (interchain with G-Cter in SUMO2)" evidence="2">
    <location>
        <position position="629"/>
    </location>
</feature>
<comment type="function">
    <text evidence="1">Acts as a transcriptional repressor. Increases DNMT3B-mediated repressive transcriptional activity when DNMT3B is tethered to DNA. May link molecule between DNMT3B and other co-repressor proteins (By similarity).</text>
</comment>
<comment type="subunit">
    <text evidence="1">Forms homodimers. Heterodimer (via HD1 domain) with ZHX2 (via HD1 domain). Also forms a heterodimer with ZHX3 which is a prerequisite for repressor activity. Interacts with ATF7IP and NFYA. Interacts (via homeobox domains) with DNMT3B (via PWWP domain) (By similarity).</text>
</comment>
<comment type="subcellular location">
    <subcellularLocation>
        <location>Nucleus</location>
    </subcellularLocation>
    <text evidence="1">Colocalized in the nucleus with DNMT3B.</text>
</comment>
<comment type="similarity">
    <text evidence="6">Belongs to the ZHX family.</text>
</comment>
<organism>
    <name type="scientific">Pongo pygmaeus</name>
    <name type="common">Bornean orangutan</name>
    <dbReference type="NCBI Taxonomy" id="9600"/>
    <lineage>
        <taxon>Eukaryota</taxon>
        <taxon>Metazoa</taxon>
        <taxon>Chordata</taxon>
        <taxon>Craniata</taxon>
        <taxon>Vertebrata</taxon>
        <taxon>Euteleostomi</taxon>
        <taxon>Mammalia</taxon>
        <taxon>Eutheria</taxon>
        <taxon>Euarchontoglires</taxon>
        <taxon>Primates</taxon>
        <taxon>Haplorrhini</taxon>
        <taxon>Catarrhini</taxon>
        <taxon>Hominidae</taxon>
        <taxon>Pongo</taxon>
    </lineage>
</organism>
<name>ZHX1_PONPY</name>
<dbReference type="EMBL" id="DQ977530">
    <property type="protein sequence ID" value="ABM89352.1"/>
    <property type="molecule type" value="Genomic_DNA"/>
</dbReference>
<dbReference type="SMR" id="A2T7S4"/>
<dbReference type="GO" id="GO:0005634">
    <property type="term" value="C:nucleus"/>
    <property type="evidence" value="ECO:0000250"/>
    <property type="project" value="UniProtKB"/>
</dbReference>
<dbReference type="GO" id="GO:0003677">
    <property type="term" value="F:DNA binding"/>
    <property type="evidence" value="ECO:0007669"/>
    <property type="project" value="UniProtKB-KW"/>
</dbReference>
<dbReference type="GO" id="GO:0000981">
    <property type="term" value="F:DNA-binding transcription factor activity, RNA polymerase II-specific"/>
    <property type="evidence" value="ECO:0007669"/>
    <property type="project" value="TreeGrafter"/>
</dbReference>
<dbReference type="GO" id="GO:0046982">
    <property type="term" value="F:protein heterodimerization activity"/>
    <property type="evidence" value="ECO:0000250"/>
    <property type="project" value="UniProtKB"/>
</dbReference>
<dbReference type="GO" id="GO:0008270">
    <property type="term" value="F:zinc ion binding"/>
    <property type="evidence" value="ECO:0007669"/>
    <property type="project" value="UniProtKB-KW"/>
</dbReference>
<dbReference type="GO" id="GO:0000122">
    <property type="term" value="P:negative regulation of transcription by RNA polymerase II"/>
    <property type="evidence" value="ECO:0000250"/>
    <property type="project" value="UniProtKB"/>
</dbReference>
<dbReference type="CDD" id="cd00086">
    <property type="entry name" value="homeodomain"/>
    <property type="match status" value="5"/>
</dbReference>
<dbReference type="FunFam" id="1.10.10.60:FF:000262">
    <property type="entry name" value="Zinc fingers and homeoboxes 1"/>
    <property type="match status" value="1"/>
</dbReference>
<dbReference type="FunFam" id="1.10.10.60:FF:000235">
    <property type="entry name" value="Zinc fingers and homeoboxes protein 1"/>
    <property type="match status" value="1"/>
</dbReference>
<dbReference type="FunFam" id="1.10.10.60:FF:000240">
    <property type="entry name" value="Zinc fingers and homeoboxes protein 1"/>
    <property type="match status" value="1"/>
</dbReference>
<dbReference type="FunFam" id="3.30.160.60:FF:000296">
    <property type="entry name" value="Zinc fingers and homeoboxes protein 1"/>
    <property type="match status" value="1"/>
</dbReference>
<dbReference type="FunFam" id="1.10.10.60:FF:000237">
    <property type="entry name" value="zinc fingers and homeoboxes protein 1"/>
    <property type="match status" value="1"/>
</dbReference>
<dbReference type="FunFam" id="1.10.10.60:FF:000133">
    <property type="entry name" value="zinc fingers and homeoboxes protein 3"/>
    <property type="match status" value="1"/>
</dbReference>
<dbReference type="Gene3D" id="3.30.160.60">
    <property type="entry name" value="Classic Zinc Finger"/>
    <property type="match status" value="1"/>
</dbReference>
<dbReference type="Gene3D" id="1.10.10.60">
    <property type="entry name" value="Homeodomain-like"/>
    <property type="match status" value="5"/>
</dbReference>
<dbReference type="InterPro" id="IPR001356">
    <property type="entry name" value="HD"/>
</dbReference>
<dbReference type="InterPro" id="IPR009057">
    <property type="entry name" value="Homeodomain-like_sf"/>
</dbReference>
<dbReference type="InterPro" id="IPR024578">
    <property type="entry name" value="Homez_homeobox_dom"/>
</dbReference>
<dbReference type="InterPro" id="IPR041057">
    <property type="entry name" value="ZHX_Znf_C2H2"/>
</dbReference>
<dbReference type="InterPro" id="IPR036236">
    <property type="entry name" value="Znf_C2H2_sf"/>
</dbReference>
<dbReference type="InterPro" id="IPR013087">
    <property type="entry name" value="Znf_C2H2_type"/>
</dbReference>
<dbReference type="PANTHER" id="PTHR15467:SF4">
    <property type="entry name" value="ZINC FINGERS AND HOMEOBOXES PROTEIN 1"/>
    <property type="match status" value="1"/>
</dbReference>
<dbReference type="PANTHER" id="PTHR15467">
    <property type="entry name" value="ZINC-FINGERS AND HOMEOBOXES RELATED"/>
    <property type="match status" value="1"/>
</dbReference>
<dbReference type="Pfam" id="PF00046">
    <property type="entry name" value="Homeodomain"/>
    <property type="match status" value="4"/>
</dbReference>
<dbReference type="Pfam" id="PF11569">
    <property type="entry name" value="Homez"/>
    <property type="match status" value="1"/>
</dbReference>
<dbReference type="Pfam" id="PF18387">
    <property type="entry name" value="zf_C2H2_ZHX"/>
    <property type="match status" value="1"/>
</dbReference>
<dbReference type="SMART" id="SM00389">
    <property type="entry name" value="HOX"/>
    <property type="match status" value="5"/>
</dbReference>
<dbReference type="SMART" id="SM00355">
    <property type="entry name" value="ZnF_C2H2"/>
    <property type="match status" value="2"/>
</dbReference>
<dbReference type="SUPFAM" id="SSF57667">
    <property type="entry name" value="beta-beta-alpha zinc fingers"/>
    <property type="match status" value="2"/>
</dbReference>
<dbReference type="SUPFAM" id="SSF46689">
    <property type="entry name" value="Homeodomain-like"/>
    <property type="match status" value="5"/>
</dbReference>
<dbReference type="PROSITE" id="PS50071">
    <property type="entry name" value="HOMEOBOX_2"/>
    <property type="match status" value="4"/>
</dbReference>
<dbReference type="PROSITE" id="PS50157">
    <property type="entry name" value="ZINC_FINGER_C2H2_2"/>
    <property type="match status" value="1"/>
</dbReference>
<reference key="1">
    <citation type="submission" date="2006-08" db="EMBL/GenBank/DDBJ databases">
        <title>Positive selection in transcription factor genes on the human lineage.</title>
        <authorList>
            <person name="Nickel G.C."/>
            <person name="Tefft D.L."/>
            <person name="Trevarthen K."/>
            <person name="Funt J."/>
            <person name="Adams M.D."/>
        </authorList>
    </citation>
    <scope>NUCLEOTIDE SEQUENCE [GENOMIC DNA]</scope>
</reference>
<evidence type="ECO:0000250" key="1"/>
<evidence type="ECO:0000250" key="2">
    <source>
        <dbReference type="UniProtKB" id="Q9UKY1"/>
    </source>
</evidence>
<evidence type="ECO:0000255" key="3">
    <source>
        <dbReference type="PROSITE-ProRule" id="PRU00042"/>
    </source>
</evidence>
<evidence type="ECO:0000255" key="4">
    <source>
        <dbReference type="PROSITE-ProRule" id="PRU00108"/>
    </source>
</evidence>
<evidence type="ECO:0000256" key="5">
    <source>
        <dbReference type="SAM" id="MobiDB-lite"/>
    </source>
</evidence>
<evidence type="ECO:0000305" key="6"/>